<sequence length="221" mass="24612">GNVDFDSESPRKPEIQNEIIDLHNSLRRSVNPTASNMLKMEWYPEAAANAERWAFRCILSHSPRDSRVIGGIKCGENIYMSTSPMKWTAIIHKWHGEEKDFVYGQGASPANAVVGHYTQIVWYKSYRSGCAAAYCPSSEYKYFYVCQYCPAGNMQGKTATPYTSGPPCGDCPSACDNGLCTNPCTHEDKFTNCKDLVKQGCNNNYLKTNCPASCSCHNEII</sequence>
<proteinExistence type="evidence at transcript level"/>
<dbReference type="EMBL" id="AM937249">
    <property type="protein sequence ID" value="CAP74088.1"/>
    <property type="molecule type" value="mRNA"/>
</dbReference>
<dbReference type="SMR" id="B7FDI0"/>
<dbReference type="GO" id="GO:0005576">
    <property type="term" value="C:extracellular region"/>
    <property type="evidence" value="ECO:0007669"/>
    <property type="project" value="UniProtKB-SubCell"/>
</dbReference>
<dbReference type="GO" id="GO:0005246">
    <property type="term" value="F:calcium channel regulator activity"/>
    <property type="evidence" value="ECO:0007669"/>
    <property type="project" value="UniProtKB-KW"/>
</dbReference>
<dbReference type="GO" id="GO:0090729">
    <property type="term" value="F:toxin activity"/>
    <property type="evidence" value="ECO:0007669"/>
    <property type="project" value="UniProtKB-KW"/>
</dbReference>
<dbReference type="CDD" id="cd05383">
    <property type="entry name" value="CAP_CRISP"/>
    <property type="match status" value="1"/>
</dbReference>
<dbReference type="FunFam" id="1.10.10.740:FF:000001">
    <property type="entry name" value="Cysteine-rich secretory protein 2"/>
    <property type="match status" value="1"/>
</dbReference>
<dbReference type="FunFam" id="3.40.33.10:FF:000005">
    <property type="entry name" value="Cysteine-rich secretory protein 2"/>
    <property type="match status" value="1"/>
</dbReference>
<dbReference type="Gene3D" id="3.40.33.10">
    <property type="entry name" value="CAP"/>
    <property type="match status" value="1"/>
</dbReference>
<dbReference type="Gene3D" id="1.10.10.740">
    <property type="entry name" value="Crisp domain"/>
    <property type="match status" value="1"/>
</dbReference>
<dbReference type="InterPro" id="IPR018244">
    <property type="entry name" value="Allrgn_V5/Tpx1_CS"/>
</dbReference>
<dbReference type="InterPro" id="IPR014044">
    <property type="entry name" value="CAP_dom"/>
</dbReference>
<dbReference type="InterPro" id="IPR035940">
    <property type="entry name" value="CAP_sf"/>
</dbReference>
<dbReference type="InterPro" id="IPR042076">
    <property type="entry name" value="Crisp-like_dom"/>
</dbReference>
<dbReference type="InterPro" id="IPR001283">
    <property type="entry name" value="CRISP-related"/>
</dbReference>
<dbReference type="InterPro" id="IPR013871">
    <property type="entry name" value="Cysteine_rich_secretory"/>
</dbReference>
<dbReference type="InterPro" id="IPR034117">
    <property type="entry name" value="SCP_CRISP"/>
</dbReference>
<dbReference type="InterPro" id="IPR003582">
    <property type="entry name" value="ShKT_dom"/>
</dbReference>
<dbReference type="InterPro" id="IPR002413">
    <property type="entry name" value="V5_allergen-like"/>
</dbReference>
<dbReference type="PANTHER" id="PTHR10334">
    <property type="entry name" value="CYSTEINE-RICH SECRETORY PROTEIN-RELATED"/>
    <property type="match status" value="1"/>
</dbReference>
<dbReference type="Pfam" id="PF00188">
    <property type="entry name" value="CAP"/>
    <property type="match status" value="1"/>
</dbReference>
<dbReference type="Pfam" id="PF08562">
    <property type="entry name" value="Crisp"/>
    <property type="match status" value="1"/>
</dbReference>
<dbReference type="PRINTS" id="PR00838">
    <property type="entry name" value="V5ALLERGEN"/>
</dbReference>
<dbReference type="PRINTS" id="PR00837">
    <property type="entry name" value="V5TPXLIKE"/>
</dbReference>
<dbReference type="SMART" id="SM00198">
    <property type="entry name" value="SCP"/>
    <property type="match status" value="1"/>
</dbReference>
<dbReference type="SUPFAM" id="SSF57546">
    <property type="entry name" value="Crisp domain-like"/>
    <property type="match status" value="1"/>
</dbReference>
<dbReference type="SUPFAM" id="SSF55797">
    <property type="entry name" value="PR-1-like"/>
    <property type="match status" value="1"/>
</dbReference>
<dbReference type="PROSITE" id="PS01009">
    <property type="entry name" value="CRISP_1"/>
    <property type="match status" value="1"/>
</dbReference>
<dbReference type="PROSITE" id="PS01010">
    <property type="entry name" value="CRISP_2"/>
    <property type="match status" value="1"/>
</dbReference>
<dbReference type="PROSITE" id="PS51670">
    <property type="entry name" value="SHKT"/>
    <property type="match status" value="1"/>
</dbReference>
<evidence type="ECO:0000250" key="1"/>
<evidence type="ECO:0000255" key="2"/>
<evidence type="ECO:0000255" key="3">
    <source>
        <dbReference type="PROSITE-ProRule" id="PRU01005"/>
    </source>
</evidence>
<evidence type="ECO:0000305" key="4"/>
<feature type="signal peptide" evidence="2">
    <location>
        <begin position="1" status="less than"/>
        <end position="1"/>
    </location>
</feature>
<feature type="chain" id="PRO_5000417202" description="Cysteine-rich venom protein">
    <location>
        <begin position="2"/>
        <end position="221"/>
    </location>
</feature>
<feature type="domain" description="SCP">
    <location>
        <begin position="21"/>
        <end position="148"/>
    </location>
</feature>
<feature type="domain" description="ShKT" evidence="3">
    <location>
        <begin position="184"/>
        <end position="216"/>
    </location>
</feature>
<feature type="disulfide bond" evidence="3">
    <location>
        <begin position="57"/>
        <end position="135"/>
    </location>
</feature>
<feature type="disulfide bond" evidence="3">
    <location>
        <begin position="74"/>
        <end position="149"/>
    </location>
</feature>
<feature type="disulfide bond" evidence="3">
    <location>
        <begin position="130"/>
        <end position="146"/>
    </location>
</feature>
<feature type="disulfide bond" evidence="3">
    <location>
        <begin position="168"/>
        <end position="175"/>
    </location>
</feature>
<feature type="disulfide bond" evidence="3">
    <location>
        <begin position="171"/>
        <end position="180"/>
    </location>
</feature>
<feature type="disulfide bond" evidence="3">
    <location>
        <begin position="184"/>
        <end position="216"/>
    </location>
</feature>
<feature type="disulfide bond" evidence="3">
    <location>
        <begin position="193"/>
        <end position="210"/>
    </location>
</feature>
<feature type="disulfide bond" evidence="3">
    <location>
        <begin position="201"/>
        <end position="214"/>
    </location>
</feature>
<feature type="non-terminal residue">
    <location>
        <position position="1"/>
    </location>
</feature>
<reference key="1">
    <citation type="journal article" date="2009" name="Toxicon">
        <title>Cysteine-rich venom proteins from the snakes of Viperinae subfamily - molecular cloning and phylogenetic relationship.</title>
        <authorList>
            <person name="Ramazanova A.S."/>
            <person name="Starkov V.G."/>
            <person name="Osipov A.V."/>
            <person name="Ziganshin R.H."/>
            <person name="Filkin S.Y."/>
            <person name="Tsetlin V.I."/>
            <person name="Utkin Y.N."/>
        </authorList>
    </citation>
    <scope>NUCLEOTIDE SEQUENCE [MRNA]</scope>
    <source>
        <tissue>Venom gland</tissue>
    </source>
</reference>
<name>CRVP_VIPNI</name>
<keyword id="KW-0108">Calcium channel impairing toxin</keyword>
<keyword id="KW-1015">Disulfide bond</keyword>
<keyword id="KW-0872">Ion channel impairing toxin</keyword>
<keyword id="KW-0528">Neurotoxin</keyword>
<keyword id="KW-0964">Secreted</keyword>
<keyword id="KW-0732">Signal</keyword>
<keyword id="KW-0800">Toxin</keyword>
<organism>
    <name type="scientific">Vipera nikolskii</name>
    <name type="common">Nikolsky's adder</name>
    <name type="synonym">Vipera berus nikolskii</name>
    <dbReference type="NCBI Taxonomy" id="1808362"/>
    <lineage>
        <taxon>Eukaryota</taxon>
        <taxon>Metazoa</taxon>
        <taxon>Chordata</taxon>
        <taxon>Craniata</taxon>
        <taxon>Vertebrata</taxon>
        <taxon>Euteleostomi</taxon>
        <taxon>Lepidosauria</taxon>
        <taxon>Squamata</taxon>
        <taxon>Bifurcata</taxon>
        <taxon>Unidentata</taxon>
        <taxon>Episquamata</taxon>
        <taxon>Toxicofera</taxon>
        <taxon>Serpentes</taxon>
        <taxon>Colubroidea</taxon>
        <taxon>Viperidae</taxon>
        <taxon>Viperinae</taxon>
        <taxon>Vipera</taxon>
    </lineage>
</organism>
<protein>
    <recommendedName>
        <fullName>Cysteine-rich venom protein</fullName>
        <shortName>CRVP</shortName>
    </recommendedName>
</protein>
<comment type="function">
    <text evidence="1">Blocks contraction of smooth muscle elicited by high potassium-induced depolarization, but does not block caffeine-stimulated contraction. May target voltage-gated calcium channels in smooth muscle (By similarity).</text>
</comment>
<comment type="subcellular location">
    <subcellularLocation>
        <location evidence="1">Secreted</location>
    </subcellularLocation>
</comment>
<comment type="tissue specificity">
    <text>Expressed by the venom gland.</text>
</comment>
<comment type="similarity">
    <text evidence="4">Belongs to the CRISP family.</text>
</comment>
<accession>B7FDI0</accession>